<accession>Q46893</accession>
<accession>Q2MA82</accession>
<reference key="1">
    <citation type="journal article" date="1999" name="Proc. Natl. Acad. Sci. U.S.A.">
        <title>Cytidine 5'-triphosphate-dependent biosynthesis of isoprenoids: YgbP protein of Escherichia coli catalyzes the formation of 4-diphosphocytidyl-2-C-methylerythritol.</title>
        <authorList>
            <person name="Rohdich F."/>
            <person name="Wungsintaweekul J."/>
            <person name="Fellermeier M."/>
            <person name="Sagner S."/>
            <person name="Herz S."/>
            <person name="Kis K."/>
            <person name="Eisenreich W."/>
            <person name="Bacher A."/>
            <person name="Zenk M.H."/>
        </authorList>
    </citation>
    <scope>NUCLEOTIDE SEQUENCE [GENOMIC DNA]</scope>
    <scope>PARTIAL PROTEIN SEQUENCE</scope>
    <scope>CHARACTERIZATION</scope>
    <source>
        <strain>K12 / DH5-alpha</strain>
    </source>
</reference>
<reference key="2">
    <citation type="journal article" date="2000" name="Tetrahedron Lett.">
        <title>Formation of 4-(cytidine 5'-diphospho)-2-C-methyl-D-erythritol from 2-C-methyl-D-erythritol 4-phosphate by 2-C-methyl-D-erythritol 4-phosphate cytidylyltransferase, a new enzyme in the nonmevalonate pathway.</title>
        <authorList>
            <person name="Kuzuyama T."/>
            <person name="Takagi M."/>
            <person name="Kaneda K."/>
            <person name="Dairi T."/>
            <person name="Seto H."/>
        </authorList>
    </citation>
    <scope>NUCLEOTIDE SEQUENCE [GENOMIC DNA]</scope>
    <source>
        <strain>K12 / W3110 / ATCC 27325 / DSM 5911</strain>
    </source>
</reference>
<reference key="3">
    <citation type="journal article" date="1997" name="Science">
        <title>The complete genome sequence of Escherichia coli K-12.</title>
        <authorList>
            <person name="Blattner F.R."/>
            <person name="Plunkett G. III"/>
            <person name="Bloch C.A."/>
            <person name="Perna N.T."/>
            <person name="Burland V."/>
            <person name="Riley M."/>
            <person name="Collado-Vides J."/>
            <person name="Glasner J.D."/>
            <person name="Rode C.K."/>
            <person name="Mayhew G.F."/>
            <person name="Gregor J."/>
            <person name="Davis N.W."/>
            <person name="Kirkpatrick H.A."/>
            <person name="Goeden M.A."/>
            <person name="Rose D.J."/>
            <person name="Mau B."/>
            <person name="Shao Y."/>
        </authorList>
    </citation>
    <scope>NUCLEOTIDE SEQUENCE [LARGE SCALE GENOMIC DNA]</scope>
    <source>
        <strain>K12 / MG1655 / ATCC 47076</strain>
    </source>
</reference>
<reference key="4">
    <citation type="journal article" date="2006" name="Mol. Syst. Biol.">
        <title>Highly accurate genome sequences of Escherichia coli K-12 strains MG1655 and W3110.</title>
        <authorList>
            <person name="Hayashi K."/>
            <person name="Morooka N."/>
            <person name="Yamamoto Y."/>
            <person name="Fujita K."/>
            <person name="Isono K."/>
            <person name="Choi S."/>
            <person name="Ohtsubo E."/>
            <person name="Baba T."/>
            <person name="Wanner B.L."/>
            <person name="Mori H."/>
            <person name="Horiuchi T."/>
        </authorList>
    </citation>
    <scope>NUCLEOTIDE SEQUENCE [LARGE SCALE GENOMIC DNA]</scope>
    <source>
        <strain>K12 / W3110 / ATCC 27325 / DSM 5911</strain>
    </source>
</reference>
<reference key="5">
    <citation type="journal article" date="2003" name="Biochem. Biophys. Res. Commun.">
        <title>Identification of lethal mutations in Escherichia coli genes encoding enzymes of the methylerythritol phosphate pathway.</title>
        <authorList>
            <person name="Sauret-Gueeto S."/>
            <person name="Ramos-Valdivia A."/>
            <person name="Ibanez E."/>
            <person name="Boronat A."/>
            <person name="Rodriguez-Concepcion M."/>
        </authorList>
    </citation>
    <scope>MUTAGENESIS OF THR-140 AND GLU-191</scope>
</reference>
<reference key="6">
    <citation type="journal article" date="2001" name="Acta Crystallogr. D">
        <title>Crystallization and preliminary X-ray diffraction studies of recombinant Escherichia coli 4-diphosphocytidyl-2-C-methyl-D-erythritol synthetase.</title>
        <authorList>
            <person name="Kemp L.E."/>
            <person name="Bond C.S."/>
            <person name="Hunter W.N."/>
        </authorList>
    </citation>
    <scope>CRYSTALLIZATION</scope>
</reference>
<reference key="7">
    <citation type="journal article" date="2001" name="Nat. Struct. Biol.">
        <title>Structure of 4-diphosphocytidyl-2-C-methylerythritol synthetase involved in mevalonate-independent isoprenoid biosynthesis.</title>
        <authorList>
            <person name="Richard S.B."/>
            <person name="Bowman M.E."/>
            <person name="Kwiatkowski W."/>
            <person name="Kang I."/>
            <person name="Chow C."/>
            <person name="Lillo A.M."/>
            <person name="Cane D.E."/>
            <person name="Noel J.P."/>
        </authorList>
    </citation>
    <scope>X-RAY CRYSTALLOGRAPHY (1.5 ANGSTROMS) IN COMPLEX WITH CTP-MG(2+) AND IN COMPLEX WITH CDP-ME-MG(2+)</scope>
    <scope>MUTAGENESIS OF LYS-27 AND LYS-213</scope>
    <source>
        <strain>K12</strain>
    </source>
</reference>
<reference key="8">
    <citation type="journal article" date="2003" name="Acta Crystallogr. D">
        <title>Structure of a tetragonal crystal form of Escherichia coli 2-C-methyl-D-erythritol 4-phosphate cytidylyltransferase.</title>
        <authorList>
            <person name="Kemp L.E."/>
            <person name="Bond C.S."/>
            <person name="Hunter W.N."/>
        </authorList>
    </citation>
    <scope>X-RAY CRYSTALLOGRAPHY (2.4 ANGSTROMS)</scope>
</reference>
<dbReference type="EC" id="2.7.7.60"/>
<dbReference type="EMBL" id="AF230736">
    <property type="protein sequence ID" value="AAF43207.1"/>
    <property type="molecule type" value="Genomic_DNA"/>
</dbReference>
<dbReference type="EMBL" id="AB037143">
    <property type="protein sequence ID" value="BAA90761.1"/>
    <property type="molecule type" value="Genomic_DNA"/>
</dbReference>
<dbReference type="EMBL" id="U29579">
    <property type="protein sequence ID" value="AAA69257.1"/>
    <property type="molecule type" value="Genomic_DNA"/>
</dbReference>
<dbReference type="EMBL" id="U00096">
    <property type="protein sequence ID" value="AAC75789.1"/>
    <property type="molecule type" value="Genomic_DNA"/>
</dbReference>
<dbReference type="EMBL" id="AP009048">
    <property type="protein sequence ID" value="BAE76824.1"/>
    <property type="molecule type" value="Genomic_DNA"/>
</dbReference>
<dbReference type="PIR" id="G65055">
    <property type="entry name" value="G65055"/>
</dbReference>
<dbReference type="RefSeq" id="NP_417227.1">
    <property type="nucleotide sequence ID" value="NC_000913.3"/>
</dbReference>
<dbReference type="RefSeq" id="WP_000246138.1">
    <property type="nucleotide sequence ID" value="NZ_STEB01000027.1"/>
</dbReference>
<dbReference type="PDB" id="1H3M">
    <property type="method" value="X-ray"/>
    <property type="resolution" value="2.40 A"/>
    <property type="chains" value="A/B=2-236"/>
</dbReference>
<dbReference type="PDB" id="1I52">
    <property type="method" value="X-ray"/>
    <property type="resolution" value="1.50 A"/>
    <property type="chains" value="A=1-236"/>
</dbReference>
<dbReference type="PDB" id="1INI">
    <property type="method" value="X-ray"/>
    <property type="resolution" value="1.82 A"/>
    <property type="chains" value="A=1-236"/>
</dbReference>
<dbReference type="PDB" id="1INJ">
    <property type="method" value="X-ray"/>
    <property type="resolution" value="1.55 A"/>
    <property type="chains" value="A=1-236"/>
</dbReference>
<dbReference type="PDB" id="1VGT">
    <property type="method" value="X-ray"/>
    <property type="resolution" value="1.80 A"/>
    <property type="chains" value="A/B=2-236"/>
</dbReference>
<dbReference type="PDB" id="1VGU">
    <property type="method" value="X-ray"/>
    <property type="resolution" value="2.80 A"/>
    <property type="chains" value="A/B=2-236"/>
</dbReference>
<dbReference type="PDB" id="3N9W">
    <property type="method" value="X-ray"/>
    <property type="resolution" value="1.90 A"/>
    <property type="chains" value="A/B=2-236"/>
</dbReference>
<dbReference type="PDBsum" id="1H3M"/>
<dbReference type="PDBsum" id="1I52"/>
<dbReference type="PDBsum" id="1INI"/>
<dbReference type="PDBsum" id="1INJ"/>
<dbReference type="PDBsum" id="1VGT"/>
<dbReference type="PDBsum" id="1VGU"/>
<dbReference type="PDBsum" id="3N9W"/>
<dbReference type="SMR" id="Q46893"/>
<dbReference type="BioGRID" id="4262280">
    <property type="interactions" value="174"/>
</dbReference>
<dbReference type="FunCoup" id="Q46893">
    <property type="interactions" value="642"/>
</dbReference>
<dbReference type="IntAct" id="Q46893">
    <property type="interactions" value="2"/>
</dbReference>
<dbReference type="STRING" id="511145.b2747"/>
<dbReference type="DrugBank" id="DB03687">
    <property type="generic name" value="4-(Cytidine 5'-diphospho)-2-C-methyl-D-erythritol"/>
</dbReference>
<dbReference type="DrugBank" id="DB03854">
    <property type="generic name" value="Cadaverine"/>
</dbReference>
<dbReference type="DrugBank" id="DB02431">
    <property type="generic name" value="Cytidine-5'-Triphosphate"/>
</dbReference>
<dbReference type="jPOST" id="Q46893"/>
<dbReference type="PaxDb" id="511145-b2747"/>
<dbReference type="EnsemblBacteria" id="AAC75789">
    <property type="protein sequence ID" value="AAC75789"/>
    <property type="gene ID" value="b2747"/>
</dbReference>
<dbReference type="GeneID" id="93779259"/>
<dbReference type="GeneID" id="948269"/>
<dbReference type="KEGG" id="ecj:JW2717"/>
<dbReference type="KEGG" id="eco:b2747"/>
<dbReference type="KEGG" id="ecoc:C3026_15105"/>
<dbReference type="PATRIC" id="fig|1411691.4.peg.3993"/>
<dbReference type="EchoBASE" id="EB2913"/>
<dbReference type="eggNOG" id="COG1211">
    <property type="taxonomic scope" value="Bacteria"/>
</dbReference>
<dbReference type="HOGENOM" id="CLU_061281_3_1_6"/>
<dbReference type="InParanoid" id="Q46893"/>
<dbReference type="OMA" id="TPMLIHA"/>
<dbReference type="OrthoDB" id="9806837at2"/>
<dbReference type="PhylomeDB" id="Q46893"/>
<dbReference type="BioCyc" id="EcoCyc:G7423-MONOMER"/>
<dbReference type="BioCyc" id="MetaCyc:G7423-MONOMER"/>
<dbReference type="BRENDA" id="2.7.7.60">
    <property type="organism ID" value="2026"/>
</dbReference>
<dbReference type="SABIO-RK" id="Q46893"/>
<dbReference type="UniPathway" id="UPA00056">
    <property type="reaction ID" value="UER00093"/>
</dbReference>
<dbReference type="EvolutionaryTrace" id="Q46893"/>
<dbReference type="PRO" id="PR:Q46893"/>
<dbReference type="Proteomes" id="UP000000625">
    <property type="component" value="Chromosome"/>
</dbReference>
<dbReference type="GO" id="GO:0005829">
    <property type="term" value="C:cytosol"/>
    <property type="evidence" value="ECO:0000314"/>
    <property type="project" value="EcoCyc"/>
</dbReference>
<dbReference type="GO" id="GO:0050518">
    <property type="term" value="F:2-C-methyl-D-erythritol 4-phosphate cytidylyltransferase activity"/>
    <property type="evidence" value="ECO:0000314"/>
    <property type="project" value="EcoCyc"/>
</dbReference>
<dbReference type="GO" id="GO:0042802">
    <property type="term" value="F:identical protein binding"/>
    <property type="evidence" value="ECO:0000314"/>
    <property type="project" value="EcoCyc"/>
</dbReference>
<dbReference type="GO" id="GO:0000287">
    <property type="term" value="F:magnesium ion binding"/>
    <property type="evidence" value="ECO:0000314"/>
    <property type="project" value="EcoCyc"/>
</dbReference>
<dbReference type="GO" id="GO:0019288">
    <property type="term" value="P:isopentenyl diphosphate biosynthetic process, methylerythritol 4-phosphate pathway"/>
    <property type="evidence" value="ECO:0007669"/>
    <property type="project" value="UniProtKB-UniRule"/>
</dbReference>
<dbReference type="CDD" id="cd02516">
    <property type="entry name" value="CDP-ME_synthetase"/>
    <property type="match status" value="1"/>
</dbReference>
<dbReference type="FunFam" id="3.90.550.10:FF:000003">
    <property type="entry name" value="2-C-methyl-D-erythritol 4-phosphate cytidylyltransferase"/>
    <property type="match status" value="1"/>
</dbReference>
<dbReference type="Gene3D" id="3.90.550.10">
    <property type="entry name" value="Spore Coat Polysaccharide Biosynthesis Protein SpsA, Chain A"/>
    <property type="match status" value="1"/>
</dbReference>
<dbReference type="HAMAP" id="MF_00108">
    <property type="entry name" value="IspD"/>
    <property type="match status" value="1"/>
</dbReference>
<dbReference type="InterPro" id="IPR001228">
    <property type="entry name" value="IspD"/>
</dbReference>
<dbReference type="InterPro" id="IPR034683">
    <property type="entry name" value="IspD/TarI"/>
</dbReference>
<dbReference type="InterPro" id="IPR050088">
    <property type="entry name" value="IspD/TarI_cytidylyltransf_bact"/>
</dbReference>
<dbReference type="InterPro" id="IPR018294">
    <property type="entry name" value="ISPD_synthase_CS"/>
</dbReference>
<dbReference type="InterPro" id="IPR029044">
    <property type="entry name" value="Nucleotide-diphossugar_trans"/>
</dbReference>
<dbReference type="NCBIfam" id="TIGR00453">
    <property type="entry name" value="ispD"/>
    <property type="match status" value="1"/>
</dbReference>
<dbReference type="PANTHER" id="PTHR32125">
    <property type="entry name" value="2-C-METHYL-D-ERYTHRITOL 4-PHOSPHATE CYTIDYLYLTRANSFERASE, CHLOROPLASTIC"/>
    <property type="match status" value="1"/>
</dbReference>
<dbReference type="PANTHER" id="PTHR32125:SF4">
    <property type="entry name" value="2-C-METHYL-D-ERYTHRITOL 4-PHOSPHATE CYTIDYLYLTRANSFERASE, CHLOROPLASTIC"/>
    <property type="match status" value="1"/>
</dbReference>
<dbReference type="Pfam" id="PF01128">
    <property type="entry name" value="IspD"/>
    <property type="match status" value="1"/>
</dbReference>
<dbReference type="SUPFAM" id="SSF53448">
    <property type="entry name" value="Nucleotide-diphospho-sugar transferases"/>
    <property type="match status" value="1"/>
</dbReference>
<dbReference type="PROSITE" id="PS01295">
    <property type="entry name" value="ISPD"/>
    <property type="match status" value="1"/>
</dbReference>
<name>ISPD_ECOLI</name>
<comment type="function">
    <text>Catalyzes the formation of 4-diphosphocytidyl-2-C-methyl-D-erythritol from CTP and 2-C-methyl-D-erythritol 4-phosphate (MEP).</text>
</comment>
<comment type="catalytic activity">
    <reaction>
        <text>2-C-methyl-D-erythritol 4-phosphate + CTP + H(+) = 4-CDP-2-C-methyl-D-erythritol + diphosphate</text>
        <dbReference type="Rhea" id="RHEA:13429"/>
        <dbReference type="ChEBI" id="CHEBI:15378"/>
        <dbReference type="ChEBI" id="CHEBI:33019"/>
        <dbReference type="ChEBI" id="CHEBI:37563"/>
        <dbReference type="ChEBI" id="CHEBI:57823"/>
        <dbReference type="ChEBI" id="CHEBI:58262"/>
        <dbReference type="EC" id="2.7.7.60"/>
    </reaction>
</comment>
<comment type="cofactor">
    <cofactor>
        <name>Mg(2+)</name>
        <dbReference type="ChEBI" id="CHEBI:18420"/>
    </cofactor>
    <cofactor>
        <name>Mn(2+)</name>
        <dbReference type="ChEBI" id="CHEBI:29035"/>
    </cofactor>
    <cofactor>
        <name>Co(2+)</name>
        <dbReference type="ChEBI" id="CHEBI:48828"/>
    </cofactor>
</comment>
<comment type="biophysicochemical properties">
    <phDependence>
        <text>Optimum pH is 8.3.</text>
    </phDependence>
</comment>
<comment type="pathway">
    <text>Isoprenoid biosynthesis; isopentenyl diphosphate biosynthesis via DXP pathway; isopentenyl diphosphate from 1-deoxy-D-xylulose 5-phosphate: step 2/6.</text>
</comment>
<comment type="subunit">
    <text evidence="1">Homodimer.</text>
</comment>
<comment type="miscellaneous">
    <text>There are no coordination bonds that occur between IspD and magnesium in any of the complexes examined to date.</text>
</comment>
<comment type="similarity">
    <text evidence="3">Belongs to the IspD/TarI cytidylyltransferase family. IspD subfamily.</text>
</comment>
<feature type="initiator methionine" description="Removed">
    <location>
        <position position="1"/>
    </location>
</feature>
<feature type="chain" id="PRO_0000075572" description="2-C-methyl-D-erythritol 4-phosphate cytidylyltransferase">
    <location>
        <begin position="2"/>
        <end position="236"/>
    </location>
</feature>
<feature type="site" description="Transition state stabilizer" evidence="1">
    <location>
        <position position="20"/>
    </location>
</feature>
<feature type="site" description="Transition state stabilizer" evidence="1">
    <location>
        <position position="27"/>
    </location>
</feature>
<feature type="site" description="Positions MEP for the nucleophilic attack" evidence="1">
    <location>
        <position position="157"/>
    </location>
</feature>
<feature type="site" description="Positions MEP for the nucleophilic attack" evidence="1">
    <location>
        <position position="213"/>
    </location>
</feature>
<feature type="mutagenesis site" description="Strong decrease in activity." evidence="1">
    <original>K</original>
    <variation>A</variation>
    <variation>S</variation>
    <location>
        <position position="27"/>
    </location>
</feature>
<feature type="mutagenesis site" description="Loss of activity." evidence="2">
    <original>T</original>
    <variation>I</variation>
    <location>
        <position position="140"/>
    </location>
</feature>
<feature type="mutagenesis site" description="Loss of activity." evidence="2">
    <original>E</original>
    <variation>K</variation>
    <location>
        <position position="191"/>
    </location>
</feature>
<feature type="mutagenesis site" description="Decrease in activity." evidence="1">
    <original>K</original>
    <variation>S</variation>
    <location>
        <position position="213"/>
    </location>
</feature>
<feature type="strand" evidence="4">
    <location>
        <begin position="8"/>
        <end position="14"/>
    </location>
</feature>
<feature type="helix" evidence="4">
    <location>
        <begin position="19"/>
        <end position="21"/>
    </location>
</feature>
<feature type="strand" evidence="5">
    <location>
        <begin position="23"/>
        <end position="25"/>
    </location>
</feature>
<feature type="helix" evidence="4">
    <location>
        <begin position="27"/>
        <end position="29"/>
    </location>
</feature>
<feature type="strand" evidence="4">
    <location>
        <begin position="30"/>
        <end position="32"/>
    </location>
</feature>
<feature type="helix" evidence="4">
    <location>
        <begin position="37"/>
        <end position="46"/>
    </location>
</feature>
<feature type="strand" evidence="4">
    <location>
        <begin position="51"/>
        <end position="58"/>
    </location>
</feature>
<feature type="helix" evidence="4">
    <location>
        <begin position="65"/>
        <end position="67"/>
    </location>
</feature>
<feature type="helix" evidence="4">
    <location>
        <begin position="69"/>
        <end position="72"/>
    </location>
</feature>
<feature type="strand" evidence="4">
    <location>
        <begin position="76"/>
        <end position="80"/>
    </location>
</feature>
<feature type="helix" evidence="4">
    <location>
        <begin position="85"/>
        <end position="94"/>
    </location>
</feature>
<feature type="strand" evidence="4">
    <location>
        <begin position="100"/>
        <end position="104"/>
    </location>
</feature>
<feature type="helix" evidence="4">
    <location>
        <begin position="114"/>
        <end position="121"/>
    </location>
</feature>
<feature type="helix" evidence="4">
    <location>
        <begin position="122"/>
        <end position="125"/>
    </location>
</feature>
<feature type="strand" evidence="4">
    <location>
        <begin position="131"/>
        <end position="136"/>
    </location>
</feature>
<feature type="strand" evidence="4">
    <location>
        <begin position="141"/>
        <end position="144"/>
    </location>
</feature>
<feature type="strand" evidence="4">
    <location>
        <begin position="148"/>
        <end position="155"/>
    </location>
</feature>
<feature type="strand" evidence="4">
    <location>
        <begin position="161"/>
        <end position="170"/>
    </location>
</feature>
<feature type="helix" evidence="4">
    <location>
        <begin position="171"/>
        <end position="183"/>
    </location>
</feature>
<feature type="helix" evidence="4">
    <location>
        <begin position="191"/>
        <end position="197"/>
    </location>
</feature>
<feature type="strand" evidence="4">
    <location>
        <begin position="203"/>
        <end position="206"/>
    </location>
</feature>
<feature type="helix" evidence="4">
    <location>
        <begin position="219"/>
        <end position="227"/>
    </location>
</feature>
<feature type="helix" evidence="6">
    <location>
        <begin position="229"/>
        <end position="233"/>
    </location>
</feature>
<sequence length="236" mass="25737">MATTHLDVCAVVPAAGFGRRMQTECPKQYLSIGNQTILEHSVHALLAHPRVKRVVIAISPGDSRFAQLPLANHPQITVVDGGDERADSVLAGLKAAGDAQWVLVHDAARPCLHQDDLARLLALSETSRTGGILAAPVRDTMKRAEPGKNAIAHTVDRNGLWHALTPQFFPRELLHDCLTRALNEGATITDEASALEYCGFHPQLVEGRADNIKVTRPEDLALAEFYLTRTIHQENT</sequence>
<keyword id="KW-0002">3D-structure</keyword>
<keyword id="KW-0170">Cobalt</keyword>
<keyword id="KW-0903">Direct protein sequencing</keyword>
<keyword id="KW-0414">Isoprene biosynthesis</keyword>
<keyword id="KW-0460">Magnesium</keyword>
<keyword id="KW-0464">Manganese</keyword>
<keyword id="KW-0548">Nucleotidyltransferase</keyword>
<keyword id="KW-1185">Reference proteome</keyword>
<keyword id="KW-0808">Transferase</keyword>
<proteinExistence type="evidence at protein level"/>
<protein>
    <recommendedName>
        <fullName>2-C-methyl-D-erythritol 4-phosphate cytidylyltransferase</fullName>
        <ecNumber>2.7.7.60</ecNumber>
    </recommendedName>
    <alternativeName>
        <fullName>4-diphosphocytidyl-2C-methyl-D-erythritol synthase</fullName>
    </alternativeName>
    <alternativeName>
        <fullName>CDP-ME synthase</fullName>
    </alternativeName>
    <alternativeName>
        <fullName>MEP cytidylyltransferase</fullName>
        <shortName>MCT</shortName>
    </alternativeName>
</protein>
<evidence type="ECO:0000269" key="1">
    <source>
    </source>
</evidence>
<evidence type="ECO:0000269" key="2">
    <source>
    </source>
</evidence>
<evidence type="ECO:0000305" key="3"/>
<evidence type="ECO:0007829" key="4">
    <source>
        <dbReference type="PDB" id="1I52"/>
    </source>
</evidence>
<evidence type="ECO:0007829" key="5">
    <source>
        <dbReference type="PDB" id="1INI"/>
    </source>
</evidence>
<evidence type="ECO:0007829" key="6">
    <source>
        <dbReference type="PDB" id="3N9W"/>
    </source>
</evidence>
<gene>
    <name type="primary">ispD</name>
    <name type="synonym">ygbP</name>
    <name type="ordered locus">b2747</name>
    <name type="ordered locus">JW2717</name>
</gene>
<organism>
    <name type="scientific">Escherichia coli (strain K12)</name>
    <dbReference type="NCBI Taxonomy" id="83333"/>
    <lineage>
        <taxon>Bacteria</taxon>
        <taxon>Pseudomonadati</taxon>
        <taxon>Pseudomonadota</taxon>
        <taxon>Gammaproteobacteria</taxon>
        <taxon>Enterobacterales</taxon>
        <taxon>Enterobacteriaceae</taxon>
        <taxon>Escherichia</taxon>
    </lineage>
</organism>